<reference key="1">
    <citation type="journal article" date="2002" name="Proc. Natl. Acad. Sci. U.S.A.">
        <title>Extensive mosaic structure revealed by the complete genome sequence of uropathogenic Escherichia coli.</title>
        <authorList>
            <person name="Welch R.A."/>
            <person name="Burland V."/>
            <person name="Plunkett G. III"/>
            <person name="Redford P."/>
            <person name="Roesch P."/>
            <person name="Rasko D."/>
            <person name="Buckles E.L."/>
            <person name="Liou S.-R."/>
            <person name="Boutin A."/>
            <person name="Hackett J."/>
            <person name="Stroud D."/>
            <person name="Mayhew G.F."/>
            <person name="Rose D.J."/>
            <person name="Zhou S."/>
            <person name="Schwartz D.C."/>
            <person name="Perna N.T."/>
            <person name="Mobley H.L.T."/>
            <person name="Donnenberg M.S."/>
            <person name="Blattner F.R."/>
        </authorList>
    </citation>
    <scope>NUCLEOTIDE SEQUENCE [LARGE SCALE GENOMIC DNA]</scope>
    <source>
        <strain>CFT073 / ATCC 700928 / UPEC</strain>
    </source>
</reference>
<gene>
    <name evidence="1" type="primary">yeaH</name>
    <name type="ordered locus">c2189</name>
</gene>
<organism>
    <name type="scientific">Escherichia coli O6:H1 (strain CFT073 / ATCC 700928 / UPEC)</name>
    <dbReference type="NCBI Taxonomy" id="199310"/>
    <lineage>
        <taxon>Bacteria</taxon>
        <taxon>Pseudomonadati</taxon>
        <taxon>Pseudomonadota</taxon>
        <taxon>Gammaproteobacteria</taxon>
        <taxon>Enterobacterales</taxon>
        <taxon>Enterobacteriaceae</taxon>
        <taxon>Escherichia</taxon>
    </lineage>
</organism>
<name>YEAH_ECOL6</name>
<dbReference type="EMBL" id="AE014075">
    <property type="protein sequence ID" value="AAN80648.1"/>
    <property type="molecule type" value="Genomic_DNA"/>
</dbReference>
<dbReference type="RefSeq" id="WP_000219684.1">
    <property type="nucleotide sequence ID" value="NZ_CP051263.1"/>
</dbReference>
<dbReference type="SMR" id="P59349"/>
<dbReference type="STRING" id="199310.c2189"/>
<dbReference type="KEGG" id="ecc:c2189"/>
<dbReference type="eggNOG" id="COG2718">
    <property type="taxonomic scope" value="Bacteria"/>
</dbReference>
<dbReference type="HOGENOM" id="CLU_049702_0_0_6"/>
<dbReference type="BioCyc" id="ECOL199310:C2189-MONOMER"/>
<dbReference type="Proteomes" id="UP000001410">
    <property type="component" value="Chromosome"/>
</dbReference>
<dbReference type="HAMAP" id="MF_01232">
    <property type="entry name" value="UPF0229"/>
    <property type="match status" value="1"/>
</dbReference>
<dbReference type="InterPro" id="IPR006698">
    <property type="entry name" value="UPF0229"/>
</dbReference>
<dbReference type="NCBIfam" id="NF003707">
    <property type="entry name" value="PRK05325.1-2"/>
    <property type="match status" value="1"/>
</dbReference>
<dbReference type="NCBIfam" id="NF003708">
    <property type="entry name" value="PRK05325.1-3"/>
    <property type="match status" value="1"/>
</dbReference>
<dbReference type="PANTHER" id="PTHR30510">
    <property type="entry name" value="UPF0229 PROTEIN YEAH"/>
    <property type="match status" value="1"/>
</dbReference>
<dbReference type="PANTHER" id="PTHR30510:SF2">
    <property type="entry name" value="UPF0229 PROTEIN YEAH"/>
    <property type="match status" value="1"/>
</dbReference>
<dbReference type="Pfam" id="PF04285">
    <property type="entry name" value="DUF444"/>
    <property type="match status" value="1"/>
</dbReference>
<accession>P59349</accession>
<protein>
    <recommendedName>
        <fullName evidence="1">UPF0229 protein YeaH</fullName>
    </recommendedName>
</protein>
<comment type="similarity">
    <text evidence="1">Belongs to the UPF0229 family.</text>
</comment>
<feature type="chain" id="PRO_0000068197" description="UPF0229 protein YeaH">
    <location>
        <begin position="1"/>
        <end position="427"/>
    </location>
</feature>
<feature type="region of interest" description="Disordered" evidence="2">
    <location>
        <begin position="79"/>
        <end position="110"/>
    </location>
</feature>
<feature type="compositionally biased region" description="Basic and acidic residues" evidence="2">
    <location>
        <begin position="79"/>
        <end position="90"/>
    </location>
</feature>
<feature type="compositionally biased region" description="Gly residues" evidence="2">
    <location>
        <begin position="92"/>
        <end position="102"/>
    </location>
</feature>
<proteinExistence type="inferred from homology"/>
<keyword id="KW-1185">Reference proteome</keyword>
<sequence length="427" mass="49450">MTWFIDRRLNGKNKSMVNRQRFLRRYKAQIKQSISEAINKRSVTDVDSGESVSIPTEDISEPMFHQGRGGLRHRVHPGNDHFVQNDRIERPQGGGGGSGSGQGQASQDGEGQDEFVFQISKDEYLDLLFEDLALPNLKQNQQRQLTEYKTHRAGYTANGVPANISVVRSLQNSLARRTAMTAGKRRELHALEENLAIISNSEPAQLLEEERLRKEIAELRAKIERVPFIDTFDLRYKNYEKRPDPSSQAVMFCLMDVSGSMDQSTKDMAKRFYILLYLFLSRTYKNVEVVYIRHHTQAKEVDEHEFFYSQETGGTIVSSALKLMDEVVKERYNPAQWNIYAAQASDGDNWADDSPLCHEILAKKILPVVRYYSYIEITRRAHQTLWREYEHLQSTFDNFAMQHIRDQDDIYPVFRELFHKQNATAKD</sequence>
<evidence type="ECO:0000255" key="1">
    <source>
        <dbReference type="HAMAP-Rule" id="MF_01232"/>
    </source>
</evidence>
<evidence type="ECO:0000256" key="2">
    <source>
        <dbReference type="SAM" id="MobiDB-lite"/>
    </source>
</evidence>